<accession>Q12TI1</accession>
<gene>
    <name type="ordered locus">Mbur_2394</name>
</gene>
<sequence>MRQPTVAGKFYPLSTKALRKEIVKCFHGLEIMSEDVIGAVVPHAGYVYSGPVAAHAFARLPKADTYVIFGPNHTGYGSPVAMSQDVWNTPFGDVETDRELGKLLAGTIIDMDEVAHRYEHSVEVQIPFLQYLFGSDFKVLPICMGMQDEDTAVEVGLEVARAVKESGKKVVFIASSDLSHYVPQEKAEKSDNYLIDAILDMDVPEIYRRKYEKDITACGYGPITAMLTAAKECGAKNTELVKYGTSGDVTGDPMVVGYAAIIVK</sequence>
<organism>
    <name type="scientific">Methanococcoides burtonii (strain DSM 6242 / NBRC 107633 / OCM 468 / ACE-M)</name>
    <dbReference type="NCBI Taxonomy" id="259564"/>
    <lineage>
        <taxon>Archaea</taxon>
        <taxon>Methanobacteriati</taxon>
        <taxon>Methanobacteriota</taxon>
        <taxon>Stenosarchaea group</taxon>
        <taxon>Methanomicrobia</taxon>
        <taxon>Methanosarcinales</taxon>
        <taxon>Methanosarcinaceae</taxon>
        <taxon>Methanococcoides</taxon>
    </lineage>
</organism>
<proteinExistence type="inferred from homology"/>
<reference key="1">
    <citation type="journal article" date="2009" name="ISME J.">
        <title>The genome sequence of the psychrophilic archaeon, Methanococcoides burtonii: the role of genome evolution in cold adaptation.</title>
        <authorList>
            <person name="Allen M.A."/>
            <person name="Lauro F.M."/>
            <person name="Williams T.J."/>
            <person name="Burg D."/>
            <person name="Siddiqui K.S."/>
            <person name="De Francisci D."/>
            <person name="Chong K.W."/>
            <person name="Pilak O."/>
            <person name="Chew H.H."/>
            <person name="De Maere M.Z."/>
            <person name="Ting L."/>
            <person name="Katrib M."/>
            <person name="Ng C."/>
            <person name="Sowers K.R."/>
            <person name="Galperin M.Y."/>
            <person name="Anderson I.J."/>
            <person name="Ivanova N."/>
            <person name="Dalin E."/>
            <person name="Martinez M."/>
            <person name="Lapidus A."/>
            <person name="Hauser L."/>
            <person name="Land M."/>
            <person name="Thomas T."/>
            <person name="Cavicchioli R."/>
        </authorList>
    </citation>
    <scope>NUCLEOTIDE SEQUENCE [LARGE SCALE GENOMIC DNA]</scope>
    <source>
        <strain>DSM 6242 / NBRC 107633 / OCM 468 / ACE-M</strain>
    </source>
</reference>
<name>Y2394_METBU</name>
<protein>
    <recommendedName>
        <fullName evidence="1">MEMO1 family protein Mbur_2394</fullName>
    </recommendedName>
</protein>
<dbReference type="EMBL" id="CP000300">
    <property type="protein sequence ID" value="ABE53245.1"/>
    <property type="molecule type" value="Genomic_DNA"/>
</dbReference>
<dbReference type="RefSeq" id="WP_011500380.1">
    <property type="nucleotide sequence ID" value="NC_007955.1"/>
</dbReference>
<dbReference type="SMR" id="Q12TI1"/>
<dbReference type="STRING" id="259564.Mbur_2394"/>
<dbReference type="GeneID" id="3998982"/>
<dbReference type="KEGG" id="mbu:Mbur_2394"/>
<dbReference type="HOGENOM" id="CLU_038085_2_0_2"/>
<dbReference type="OrthoDB" id="372162at2157"/>
<dbReference type="Proteomes" id="UP000001979">
    <property type="component" value="Chromosome"/>
</dbReference>
<dbReference type="CDD" id="cd07361">
    <property type="entry name" value="MEMO_like"/>
    <property type="match status" value="1"/>
</dbReference>
<dbReference type="Gene3D" id="3.40.830.10">
    <property type="entry name" value="LigB-like"/>
    <property type="match status" value="1"/>
</dbReference>
<dbReference type="HAMAP" id="MF_00055">
    <property type="entry name" value="MEMO1"/>
    <property type="match status" value="1"/>
</dbReference>
<dbReference type="InterPro" id="IPR002737">
    <property type="entry name" value="MEMO1_fam"/>
</dbReference>
<dbReference type="NCBIfam" id="TIGR04336">
    <property type="entry name" value="AmmeMemoSam_B"/>
    <property type="match status" value="1"/>
</dbReference>
<dbReference type="NCBIfam" id="NF001987">
    <property type="entry name" value="PRK00782.1"/>
    <property type="match status" value="1"/>
</dbReference>
<dbReference type="PANTHER" id="PTHR11060">
    <property type="entry name" value="PROTEIN MEMO1"/>
    <property type="match status" value="1"/>
</dbReference>
<dbReference type="PANTHER" id="PTHR11060:SF0">
    <property type="entry name" value="PROTEIN MEMO1"/>
    <property type="match status" value="1"/>
</dbReference>
<dbReference type="Pfam" id="PF01875">
    <property type="entry name" value="Memo"/>
    <property type="match status" value="1"/>
</dbReference>
<dbReference type="SUPFAM" id="SSF53213">
    <property type="entry name" value="LigB-like"/>
    <property type="match status" value="1"/>
</dbReference>
<feature type="chain" id="PRO_1000003319" description="MEMO1 family protein Mbur_2394">
    <location>
        <begin position="1"/>
        <end position="264"/>
    </location>
</feature>
<evidence type="ECO:0000255" key="1">
    <source>
        <dbReference type="HAMAP-Rule" id="MF_00055"/>
    </source>
</evidence>
<comment type="similarity">
    <text evidence="1">Belongs to the MEMO1 family.</text>
</comment>